<dbReference type="EMBL" id="AB125036">
    <property type="protein sequence ID" value="BAD14099.1"/>
    <property type="molecule type" value="Genomic_DNA"/>
</dbReference>
<dbReference type="GO" id="GO:0009507">
    <property type="term" value="C:chloroplast"/>
    <property type="evidence" value="ECO:0007669"/>
    <property type="project" value="UniProtKB-SubCell"/>
</dbReference>
<dbReference type="GO" id="GO:0003723">
    <property type="term" value="F:RNA binding"/>
    <property type="evidence" value="ECO:0007669"/>
    <property type="project" value="UniProtKB-KW"/>
</dbReference>
<dbReference type="GO" id="GO:0006397">
    <property type="term" value="P:mRNA processing"/>
    <property type="evidence" value="ECO:0007669"/>
    <property type="project" value="UniProtKB-KW"/>
</dbReference>
<dbReference type="GO" id="GO:0008380">
    <property type="term" value="P:RNA splicing"/>
    <property type="evidence" value="ECO:0007669"/>
    <property type="project" value="UniProtKB-UniRule"/>
</dbReference>
<dbReference type="GO" id="GO:0008033">
    <property type="term" value="P:tRNA processing"/>
    <property type="evidence" value="ECO:0007669"/>
    <property type="project" value="UniProtKB-KW"/>
</dbReference>
<dbReference type="HAMAP" id="MF_01390">
    <property type="entry name" value="MatK"/>
    <property type="match status" value="1"/>
</dbReference>
<dbReference type="InterPro" id="IPR024937">
    <property type="entry name" value="Domain_X"/>
</dbReference>
<dbReference type="InterPro" id="IPR002866">
    <property type="entry name" value="Maturase_MatK"/>
</dbReference>
<dbReference type="InterPro" id="IPR024942">
    <property type="entry name" value="Maturase_MatK_N"/>
</dbReference>
<dbReference type="PANTHER" id="PTHR34811">
    <property type="entry name" value="MATURASE K"/>
    <property type="match status" value="1"/>
</dbReference>
<dbReference type="PANTHER" id="PTHR34811:SF1">
    <property type="entry name" value="MATURASE K"/>
    <property type="match status" value="1"/>
</dbReference>
<dbReference type="Pfam" id="PF01348">
    <property type="entry name" value="Intron_maturas2"/>
    <property type="match status" value="1"/>
</dbReference>
<dbReference type="Pfam" id="PF01824">
    <property type="entry name" value="MatK_N"/>
    <property type="match status" value="1"/>
</dbReference>
<protein>
    <recommendedName>
        <fullName evidence="1">Maturase K</fullName>
    </recommendedName>
    <alternativeName>
        <fullName evidence="1">Intron maturase</fullName>
    </alternativeName>
</protein>
<keyword id="KW-0150">Chloroplast</keyword>
<keyword id="KW-0507">mRNA processing</keyword>
<keyword id="KW-0934">Plastid</keyword>
<keyword id="KW-0694">RNA-binding</keyword>
<keyword id="KW-0819">tRNA processing</keyword>
<accession>Q75VB3</accession>
<gene>
    <name evidence="1" type="primary">matK</name>
</gene>
<proteinExistence type="inferred from homology"/>
<feature type="chain" id="PRO_0000143661" description="Maturase K">
    <location>
        <begin position="1"/>
        <end position="504"/>
    </location>
</feature>
<comment type="function">
    <text evidence="1">Usually encoded in the trnK tRNA gene intron. Probably assists in splicing its own and other chloroplast group II introns.</text>
</comment>
<comment type="subcellular location">
    <subcellularLocation>
        <location>Plastid</location>
        <location>Chloroplast</location>
    </subcellularLocation>
</comment>
<comment type="similarity">
    <text evidence="1">Belongs to the intron maturase 2 family. MatK subfamily.</text>
</comment>
<organism>
    <name type="scientific">Quercus gemelliflora</name>
    <name type="common">Pasang hiris</name>
    <name type="synonym">Cyclobalanopsis gemelliflora</name>
    <dbReference type="NCBI Taxonomy" id="252765"/>
    <lineage>
        <taxon>Eukaryota</taxon>
        <taxon>Viridiplantae</taxon>
        <taxon>Streptophyta</taxon>
        <taxon>Embryophyta</taxon>
        <taxon>Tracheophyta</taxon>
        <taxon>Spermatophyta</taxon>
        <taxon>Magnoliopsida</taxon>
        <taxon>eudicotyledons</taxon>
        <taxon>Gunneridae</taxon>
        <taxon>Pentapetalae</taxon>
        <taxon>rosids</taxon>
        <taxon>fabids</taxon>
        <taxon>Fagales</taxon>
        <taxon>Fagaceae</taxon>
        <taxon>Quercus</taxon>
    </lineage>
</organism>
<sequence>MEEFQGYLELDRFRQHDFLYPLIFREYSYALAHGHGLNRYMLLENIGYDNKSSLLIVKRLITTMYHQNYLIISANDSKQNPFFGYNKNLHSKILSEGFAIIVEIPFYLRLISSLEGAEIVRFYNLRSIHSIFPFLEEKFPHLNYSADILIPYPAHLEILVQTLRYRVKDASYLHLLRFFLHEYSNCNSLIITNKSISIFSKSNPRFFLFLYNSYICEYESIFLFLRNQSSHLRLTSSGVLFERLCLYRKIEHFAEVFANDFPVIPCFLKDPFMHYVRYQGKSILASKDTPLLMNKWKSYLVNLWQCHFDVWSHAASIRINQLSKHSLDFLSYFSSVRRNPAVVRNQMLENSFLLNNAPNKLDTIVPIIPLIGSLAKAKFCNAVGHPISKLTRADLSDFEIINRFLHICRNLSHYYSGSSKKKNMYRIKYILRLSCVKTLARKHKSTARAFLKRVDSEFFQEFFTEEGGFISLIFPRASFALRRLYSGRVWYLDIIFINGLSNHE</sequence>
<reference key="1">
    <citation type="journal article" date="2003" name="Tropics">
        <title>Phylogeny and genetic variation of Fagaceae in tropical montane forests.</title>
        <authorList>
            <person name="Kamiya K."/>
            <person name="Harada K."/>
            <person name="Ogino K."/>
            <person name="Mahani M.C."/>
            <person name="Latiff A."/>
        </authorList>
    </citation>
    <scope>NUCLEOTIDE SEQUENCE [GENOMIC DNA]</scope>
</reference>
<name>MATK_QUEGE</name>
<geneLocation type="chloroplast"/>
<evidence type="ECO:0000255" key="1">
    <source>
        <dbReference type="HAMAP-Rule" id="MF_01390"/>
    </source>
</evidence>